<proteinExistence type="inferred from homology"/>
<protein>
    <recommendedName>
        <fullName evidence="1">ATP synthase subunit alpha</fullName>
        <ecNumber evidence="1">7.1.2.2</ecNumber>
    </recommendedName>
    <alternativeName>
        <fullName evidence="1">ATP synthase F1 sector subunit alpha</fullName>
    </alternativeName>
    <alternativeName>
        <fullName evidence="1">F-ATPase subunit alpha</fullName>
    </alternativeName>
</protein>
<gene>
    <name evidence="1" type="primary">atpA</name>
    <name type="ordered locus">THEYE_A0239</name>
</gene>
<name>ATPA_THEYD</name>
<sequence>MELKMEEISEYLKKQIADFEKKADVSEVGIVTSIGDGVARIYGLDNCMASEMLELPNGVYGMALNLEEDNVGAILFGDDRLVKEGDLVKRTGRVMETPVGEELIGRVVNAIGIPIDGKGPINAKTSRKVDVIAPGIIKRQPVKEPLQTGLKAIDAMIPIGRGQRELVIGDRQTGKTAILLDTIINQKGQNCICIYVACGQRRQSVVQVVETLKKYGAMDHTIVVAATASEPASMQYLAPYVGCAMGEYFRDKGMHALVCYDDLTKQAYAYRQVSLILRRPPGREAYPGDVFYLHSRLLERAAKLSDAEGGGSLTALPVIETQAGDVSGYIPTNVISITDGQIYLEPELFYAGVRPAINVGLSVSRVGGAAQIKAMKQVAGMLRLDLAQYRELAAFAQFAADLDKATRALLERGQRMVELLKQDQYVPMPVEDQIMLIFAGTQGHLDDLPVSAIKAFEQGFLSFIRSQKEDIRKEIREKKELDDTLKQKITDAILEFKKTFQP</sequence>
<keyword id="KW-0066">ATP synthesis</keyword>
<keyword id="KW-0067">ATP-binding</keyword>
<keyword id="KW-0997">Cell inner membrane</keyword>
<keyword id="KW-1003">Cell membrane</keyword>
<keyword id="KW-0139">CF(1)</keyword>
<keyword id="KW-0375">Hydrogen ion transport</keyword>
<keyword id="KW-0406">Ion transport</keyword>
<keyword id="KW-0472">Membrane</keyword>
<keyword id="KW-0547">Nucleotide-binding</keyword>
<keyword id="KW-1185">Reference proteome</keyword>
<keyword id="KW-1278">Translocase</keyword>
<keyword id="KW-0813">Transport</keyword>
<feature type="chain" id="PRO_1000143450" description="ATP synthase subunit alpha">
    <location>
        <begin position="1"/>
        <end position="502"/>
    </location>
</feature>
<feature type="binding site" evidence="1">
    <location>
        <begin position="169"/>
        <end position="176"/>
    </location>
    <ligand>
        <name>ATP</name>
        <dbReference type="ChEBI" id="CHEBI:30616"/>
    </ligand>
</feature>
<feature type="site" description="Required for activity" evidence="1">
    <location>
        <position position="362"/>
    </location>
</feature>
<accession>B5YI22</accession>
<reference key="1">
    <citation type="submission" date="2008-08" db="EMBL/GenBank/DDBJ databases">
        <title>The complete genome sequence of Thermodesulfovibrio yellowstonii strain ATCC 51303 / DSM 11347 / YP87.</title>
        <authorList>
            <person name="Dodson R.J."/>
            <person name="Durkin A.S."/>
            <person name="Wu M."/>
            <person name="Eisen J."/>
            <person name="Sutton G."/>
        </authorList>
    </citation>
    <scope>NUCLEOTIDE SEQUENCE [LARGE SCALE GENOMIC DNA]</scope>
    <source>
        <strain>ATCC 51303 / DSM 11347 / YP87</strain>
    </source>
</reference>
<comment type="function">
    <text evidence="1">Produces ATP from ADP in the presence of a proton gradient across the membrane. The alpha chain is a regulatory subunit.</text>
</comment>
<comment type="catalytic activity">
    <reaction evidence="1">
        <text>ATP + H2O + 4 H(+)(in) = ADP + phosphate + 5 H(+)(out)</text>
        <dbReference type="Rhea" id="RHEA:57720"/>
        <dbReference type="ChEBI" id="CHEBI:15377"/>
        <dbReference type="ChEBI" id="CHEBI:15378"/>
        <dbReference type="ChEBI" id="CHEBI:30616"/>
        <dbReference type="ChEBI" id="CHEBI:43474"/>
        <dbReference type="ChEBI" id="CHEBI:456216"/>
        <dbReference type="EC" id="7.1.2.2"/>
    </reaction>
</comment>
<comment type="subunit">
    <text evidence="1">F-type ATPases have 2 components, CF(1) - the catalytic core - and CF(0) - the membrane proton channel. CF(1) has five subunits: alpha(3), beta(3), gamma(1), delta(1), epsilon(1). CF(0) has three main subunits: a(1), b(2) and c(9-12). The alpha and beta chains form an alternating ring which encloses part of the gamma chain. CF(1) is attached to CF(0) by a central stalk formed by the gamma and epsilon chains, while a peripheral stalk is formed by the delta and b chains.</text>
</comment>
<comment type="subcellular location">
    <subcellularLocation>
        <location evidence="1">Cell inner membrane</location>
        <topology evidence="1">Peripheral membrane protein</topology>
    </subcellularLocation>
</comment>
<comment type="similarity">
    <text evidence="1">Belongs to the ATPase alpha/beta chains family.</text>
</comment>
<evidence type="ECO:0000255" key="1">
    <source>
        <dbReference type="HAMAP-Rule" id="MF_01346"/>
    </source>
</evidence>
<organism>
    <name type="scientific">Thermodesulfovibrio yellowstonii (strain ATCC 51303 / DSM 11347 / YP87)</name>
    <dbReference type="NCBI Taxonomy" id="289376"/>
    <lineage>
        <taxon>Bacteria</taxon>
        <taxon>Pseudomonadati</taxon>
        <taxon>Nitrospirota</taxon>
        <taxon>Thermodesulfovibrionia</taxon>
        <taxon>Thermodesulfovibrionales</taxon>
        <taxon>Thermodesulfovibrionaceae</taxon>
        <taxon>Thermodesulfovibrio</taxon>
    </lineage>
</organism>
<dbReference type="EC" id="7.1.2.2" evidence="1"/>
<dbReference type="EMBL" id="CP001147">
    <property type="protein sequence ID" value="ACI20635.1"/>
    <property type="molecule type" value="Genomic_DNA"/>
</dbReference>
<dbReference type="RefSeq" id="WP_012545369.1">
    <property type="nucleotide sequence ID" value="NC_011296.1"/>
</dbReference>
<dbReference type="RefSeq" id="YP_002248088.1">
    <property type="nucleotide sequence ID" value="NC_011296.1"/>
</dbReference>
<dbReference type="SMR" id="B5YI22"/>
<dbReference type="FunCoup" id="B5YI22">
    <property type="interactions" value="319"/>
</dbReference>
<dbReference type="STRING" id="289376.THEYE_A0239"/>
<dbReference type="EnsemblBacteria" id="ACI20635">
    <property type="protein sequence ID" value="ACI20635"/>
    <property type="gene ID" value="THEYE_A0239"/>
</dbReference>
<dbReference type="KEGG" id="tye:THEYE_A0239"/>
<dbReference type="PATRIC" id="fig|289376.4.peg.236"/>
<dbReference type="eggNOG" id="COG0056">
    <property type="taxonomic scope" value="Bacteria"/>
</dbReference>
<dbReference type="HOGENOM" id="CLU_010091_2_1_0"/>
<dbReference type="InParanoid" id="B5YI22"/>
<dbReference type="OrthoDB" id="9803053at2"/>
<dbReference type="Proteomes" id="UP000000718">
    <property type="component" value="Chromosome"/>
</dbReference>
<dbReference type="GO" id="GO:0005886">
    <property type="term" value="C:plasma membrane"/>
    <property type="evidence" value="ECO:0007669"/>
    <property type="project" value="UniProtKB-SubCell"/>
</dbReference>
<dbReference type="GO" id="GO:0045259">
    <property type="term" value="C:proton-transporting ATP synthase complex"/>
    <property type="evidence" value="ECO:0007669"/>
    <property type="project" value="UniProtKB-KW"/>
</dbReference>
<dbReference type="GO" id="GO:0043531">
    <property type="term" value="F:ADP binding"/>
    <property type="evidence" value="ECO:0000318"/>
    <property type="project" value="GO_Central"/>
</dbReference>
<dbReference type="GO" id="GO:0005524">
    <property type="term" value="F:ATP binding"/>
    <property type="evidence" value="ECO:0000318"/>
    <property type="project" value="GO_Central"/>
</dbReference>
<dbReference type="GO" id="GO:0046933">
    <property type="term" value="F:proton-transporting ATP synthase activity, rotational mechanism"/>
    <property type="evidence" value="ECO:0007669"/>
    <property type="project" value="UniProtKB-UniRule"/>
</dbReference>
<dbReference type="GO" id="GO:0015986">
    <property type="term" value="P:proton motive force-driven ATP synthesis"/>
    <property type="evidence" value="ECO:0000318"/>
    <property type="project" value="GO_Central"/>
</dbReference>
<dbReference type="CDD" id="cd18113">
    <property type="entry name" value="ATP-synt_F1_alpha_C"/>
    <property type="match status" value="1"/>
</dbReference>
<dbReference type="CDD" id="cd18116">
    <property type="entry name" value="ATP-synt_F1_alpha_N"/>
    <property type="match status" value="1"/>
</dbReference>
<dbReference type="CDD" id="cd01132">
    <property type="entry name" value="F1-ATPase_alpha_CD"/>
    <property type="match status" value="1"/>
</dbReference>
<dbReference type="FunFam" id="1.20.150.20:FF:000001">
    <property type="entry name" value="ATP synthase subunit alpha"/>
    <property type="match status" value="1"/>
</dbReference>
<dbReference type="FunFam" id="2.40.30.20:FF:000001">
    <property type="entry name" value="ATP synthase subunit alpha"/>
    <property type="match status" value="1"/>
</dbReference>
<dbReference type="FunFam" id="3.40.50.300:FF:000002">
    <property type="entry name" value="ATP synthase subunit alpha"/>
    <property type="match status" value="1"/>
</dbReference>
<dbReference type="Gene3D" id="2.40.30.20">
    <property type="match status" value="1"/>
</dbReference>
<dbReference type="Gene3D" id="1.20.150.20">
    <property type="entry name" value="ATP synthase alpha/beta chain, C-terminal domain"/>
    <property type="match status" value="1"/>
</dbReference>
<dbReference type="Gene3D" id="3.40.50.300">
    <property type="entry name" value="P-loop containing nucleotide triphosphate hydrolases"/>
    <property type="match status" value="1"/>
</dbReference>
<dbReference type="HAMAP" id="MF_01346">
    <property type="entry name" value="ATP_synth_alpha_bact"/>
    <property type="match status" value="1"/>
</dbReference>
<dbReference type="InterPro" id="IPR023366">
    <property type="entry name" value="ATP_synth_asu-like_sf"/>
</dbReference>
<dbReference type="InterPro" id="IPR000793">
    <property type="entry name" value="ATP_synth_asu_C"/>
</dbReference>
<dbReference type="InterPro" id="IPR038376">
    <property type="entry name" value="ATP_synth_asu_C_sf"/>
</dbReference>
<dbReference type="InterPro" id="IPR033732">
    <property type="entry name" value="ATP_synth_F1_a_nt-bd_dom"/>
</dbReference>
<dbReference type="InterPro" id="IPR005294">
    <property type="entry name" value="ATP_synth_F1_asu"/>
</dbReference>
<dbReference type="InterPro" id="IPR020003">
    <property type="entry name" value="ATPase_a/bsu_AS"/>
</dbReference>
<dbReference type="InterPro" id="IPR004100">
    <property type="entry name" value="ATPase_F1/V1/A1_a/bsu_N"/>
</dbReference>
<dbReference type="InterPro" id="IPR036121">
    <property type="entry name" value="ATPase_F1/V1/A1_a/bsu_N_sf"/>
</dbReference>
<dbReference type="InterPro" id="IPR000194">
    <property type="entry name" value="ATPase_F1/V1/A1_a/bsu_nucl-bd"/>
</dbReference>
<dbReference type="InterPro" id="IPR027417">
    <property type="entry name" value="P-loop_NTPase"/>
</dbReference>
<dbReference type="NCBIfam" id="TIGR00962">
    <property type="entry name" value="atpA"/>
    <property type="match status" value="1"/>
</dbReference>
<dbReference type="NCBIfam" id="NF009884">
    <property type="entry name" value="PRK13343.1"/>
    <property type="match status" value="1"/>
</dbReference>
<dbReference type="PANTHER" id="PTHR48082">
    <property type="entry name" value="ATP SYNTHASE SUBUNIT ALPHA, MITOCHONDRIAL"/>
    <property type="match status" value="1"/>
</dbReference>
<dbReference type="PANTHER" id="PTHR48082:SF2">
    <property type="entry name" value="ATP SYNTHASE SUBUNIT ALPHA, MITOCHONDRIAL"/>
    <property type="match status" value="1"/>
</dbReference>
<dbReference type="Pfam" id="PF00006">
    <property type="entry name" value="ATP-synt_ab"/>
    <property type="match status" value="1"/>
</dbReference>
<dbReference type="Pfam" id="PF00306">
    <property type="entry name" value="ATP-synt_ab_C"/>
    <property type="match status" value="1"/>
</dbReference>
<dbReference type="Pfam" id="PF02874">
    <property type="entry name" value="ATP-synt_ab_N"/>
    <property type="match status" value="1"/>
</dbReference>
<dbReference type="PIRSF" id="PIRSF039088">
    <property type="entry name" value="F_ATPase_subunit_alpha"/>
    <property type="match status" value="1"/>
</dbReference>
<dbReference type="SUPFAM" id="SSF47917">
    <property type="entry name" value="C-terminal domain of alpha and beta subunits of F1 ATP synthase"/>
    <property type="match status" value="1"/>
</dbReference>
<dbReference type="SUPFAM" id="SSF50615">
    <property type="entry name" value="N-terminal domain of alpha and beta subunits of F1 ATP synthase"/>
    <property type="match status" value="1"/>
</dbReference>
<dbReference type="SUPFAM" id="SSF52540">
    <property type="entry name" value="P-loop containing nucleoside triphosphate hydrolases"/>
    <property type="match status" value="1"/>
</dbReference>
<dbReference type="PROSITE" id="PS00152">
    <property type="entry name" value="ATPASE_ALPHA_BETA"/>
    <property type="match status" value="1"/>
</dbReference>